<keyword id="KW-0031">Aminopeptidase</keyword>
<keyword id="KW-0963">Cytoplasm</keyword>
<keyword id="KW-0378">Hydrolase</keyword>
<keyword id="KW-0464">Manganese</keyword>
<keyword id="KW-0479">Metal-binding</keyword>
<keyword id="KW-0645">Protease</keyword>
<feature type="chain" id="PRO_1000098355" description="Probable cytosol aminopeptidase">
    <location>
        <begin position="1"/>
        <end position="504"/>
    </location>
</feature>
<feature type="active site" evidence="1">
    <location>
        <position position="275"/>
    </location>
</feature>
<feature type="active site" evidence="1">
    <location>
        <position position="349"/>
    </location>
</feature>
<feature type="binding site" evidence="1">
    <location>
        <position position="263"/>
    </location>
    <ligand>
        <name>Mn(2+)</name>
        <dbReference type="ChEBI" id="CHEBI:29035"/>
        <label>2</label>
    </ligand>
</feature>
<feature type="binding site" evidence="1">
    <location>
        <position position="268"/>
    </location>
    <ligand>
        <name>Mn(2+)</name>
        <dbReference type="ChEBI" id="CHEBI:29035"/>
        <label>1</label>
    </ligand>
</feature>
<feature type="binding site" evidence="1">
    <location>
        <position position="268"/>
    </location>
    <ligand>
        <name>Mn(2+)</name>
        <dbReference type="ChEBI" id="CHEBI:29035"/>
        <label>2</label>
    </ligand>
</feature>
<feature type="binding site" evidence="1">
    <location>
        <position position="286"/>
    </location>
    <ligand>
        <name>Mn(2+)</name>
        <dbReference type="ChEBI" id="CHEBI:29035"/>
        <label>2</label>
    </ligand>
</feature>
<feature type="binding site" evidence="1">
    <location>
        <position position="345"/>
    </location>
    <ligand>
        <name>Mn(2+)</name>
        <dbReference type="ChEBI" id="CHEBI:29035"/>
        <label>1</label>
    </ligand>
</feature>
<feature type="binding site" evidence="1">
    <location>
        <position position="347"/>
    </location>
    <ligand>
        <name>Mn(2+)</name>
        <dbReference type="ChEBI" id="CHEBI:29035"/>
        <label>1</label>
    </ligand>
</feature>
<feature type="binding site" evidence="1">
    <location>
        <position position="347"/>
    </location>
    <ligand>
        <name>Mn(2+)</name>
        <dbReference type="ChEBI" id="CHEBI:29035"/>
        <label>2</label>
    </ligand>
</feature>
<reference key="1">
    <citation type="journal article" date="2009" name="J. Bacteriol.">
        <title>Complete and draft genome sequences of six members of the Aquificales.</title>
        <authorList>
            <person name="Reysenbach A.-L."/>
            <person name="Hamamura N."/>
            <person name="Podar M."/>
            <person name="Griffiths E."/>
            <person name="Ferreira S."/>
            <person name="Hochstein R."/>
            <person name="Heidelberg J."/>
            <person name="Johnson J."/>
            <person name="Mead D."/>
            <person name="Pohorille A."/>
            <person name="Sarmiento M."/>
            <person name="Schweighofer K."/>
            <person name="Seshadri R."/>
            <person name="Voytek M.A."/>
        </authorList>
    </citation>
    <scope>NUCLEOTIDE SEQUENCE [LARGE SCALE GENOMIC DNA]</scope>
    <source>
        <strain>YO3AOP1</strain>
    </source>
</reference>
<protein>
    <recommendedName>
        <fullName evidence="1">Probable cytosol aminopeptidase</fullName>
        <ecNumber evidence="1">3.4.11.1</ecNumber>
    </recommendedName>
    <alternativeName>
        <fullName evidence="1">Leucine aminopeptidase</fullName>
        <shortName evidence="1">LAP</shortName>
        <ecNumber evidence="1">3.4.11.10</ecNumber>
    </alternativeName>
    <alternativeName>
        <fullName evidence="1">Leucyl aminopeptidase</fullName>
    </alternativeName>
</protein>
<organism>
    <name type="scientific">Sulfurihydrogenibium sp. (strain YO3AOP1)</name>
    <dbReference type="NCBI Taxonomy" id="436114"/>
    <lineage>
        <taxon>Bacteria</taxon>
        <taxon>Pseudomonadati</taxon>
        <taxon>Aquificota</taxon>
        <taxon>Aquificia</taxon>
        <taxon>Aquificales</taxon>
        <taxon>Hydrogenothermaceae</taxon>
        <taxon>Sulfurihydrogenibium</taxon>
    </lineage>
</organism>
<sequence>MEINLTTKKLDNVKTDAVFFLMFEDNKKLEGELEKIDKALNGGVSDLIKLQKYKAEEGKFLIVPTLGKIKANYVAIVGLGKEKKFENDILRRVASYIIRKAKELKLSDIIIDTNLQQFENYDEVVQAITEGLILGDYSFDKYFSKKDEHKVKEVQVNIPKNQDKDRLNEFVRIGEILAEAQNFTRDLVNEPANVINTIQFAEIAEKLAKEYGFEIKIYDEEEIEKMGMGAYLAVAKGSDNPPRFIHLTYRPKNSQGEVAIVGKGLMFDSGGLNIKTGDFMRWMKSDKSGACAVFGIFKAIGELKPDITVHGIVAAAENMPSGKAYRPDDILKAKNGVTIEVGNTDAEGRLTLADALSYASELKPDAIIDMATLTGACVVALGEFTAGVMGNNQKFINEILKTSEETGEWMWQLPFNDKLREQIKAPHADVYNVGTTRYGGAITAGLFLEKFVDPKIPWVHIDIAGPSHHTSGWYYHPKGATGIPVRTITWYLLKRSKFFDKIGK</sequence>
<evidence type="ECO:0000255" key="1">
    <source>
        <dbReference type="HAMAP-Rule" id="MF_00181"/>
    </source>
</evidence>
<dbReference type="EC" id="3.4.11.1" evidence="1"/>
<dbReference type="EC" id="3.4.11.10" evidence="1"/>
<dbReference type="EMBL" id="CP001080">
    <property type="protein sequence ID" value="ACD65687.1"/>
    <property type="molecule type" value="Genomic_DNA"/>
</dbReference>
<dbReference type="RefSeq" id="WP_012458779.1">
    <property type="nucleotide sequence ID" value="NC_010730.1"/>
</dbReference>
<dbReference type="SMR" id="B2V6F5"/>
<dbReference type="STRING" id="436114.SYO3AOP1_0038"/>
<dbReference type="MEROPS" id="M17.016"/>
<dbReference type="KEGG" id="sul:SYO3AOP1_0038"/>
<dbReference type="eggNOG" id="COG0260">
    <property type="taxonomic scope" value="Bacteria"/>
</dbReference>
<dbReference type="HOGENOM" id="CLU_013734_2_2_0"/>
<dbReference type="GO" id="GO:0005737">
    <property type="term" value="C:cytoplasm"/>
    <property type="evidence" value="ECO:0007669"/>
    <property type="project" value="UniProtKB-SubCell"/>
</dbReference>
<dbReference type="GO" id="GO:0030145">
    <property type="term" value="F:manganese ion binding"/>
    <property type="evidence" value="ECO:0007669"/>
    <property type="project" value="UniProtKB-UniRule"/>
</dbReference>
<dbReference type="GO" id="GO:0070006">
    <property type="term" value="F:metalloaminopeptidase activity"/>
    <property type="evidence" value="ECO:0007669"/>
    <property type="project" value="InterPro"/>
</dbReference>
<dbReference type="GO" id="GO:0006508">
    <property type="term" value="P:proteolysis"/>
    <property type="evidence" value="ECO:0007669"/>
    <property type="project" value="UniProtKB-KW"/>
</dbReference>
<dbReference type="CDD" id="cd00433">
    <property type="entry name" value="Peptidase_M17"/>
    <property type="match status" value="1"/>
</dbReference>
<dbReference type="Gene3D" id="3.40.220.10">
    <property type="entry name" value="Leucine Aminopeptidase, subunit E, domain 1"/>
    <property type="match status" value="1"/>
</dbReference>
<dbReference type="Gene3D" id="3.40.630.10">
    <property type="entry name" value="Zn peptidases"/>
    <property type="match status" value="1"/>
</dbReference>
<dbReference type="HAMAP" id="MF_00181">
    <property type="entry name" value="Cytosol_peptidase_M17"/>
    <property type="match status" value="1"/>
</dbReference>
<dbReference type="InterPro" id="IPR011356">
    <property type="entry name" value="Leucine_aapep/pepB"/>
</dbReference>
<dbReference type="InterPro" id="IPR043472">
    <property type="entry name" value="Macro_dom-like"/>
</dbReference>
<dbReference type="InterPro" id="IPR000819">
    <property type="entry name" value="Peptidase_M17_C"/>
</dbReference>
<dbReference type="InterPro" id="IPR023042">
    <property type="entry name" value="Peptidase_M17_leu_NH2_pept"/>
</dbReference>
<dbReference type="InterPro" id="IPR008283">
    <property type="entry name" value="Peptidase_M17_N"/>
</dbReference>
<dbReference type="NCBIfam" id="NF002073">
    <property type="entry name" value="PRK00913.1-2"/>
    <property type="match status" value="1"/>
</dbReference>
<dbReference type="NCBIfam" id="NF002074">
    <property type="entry name" value="PRK00913.1-4"/>
    <property type="match status" value="1"/>
</dbReference>
<dbReference type="NCBIfam" id="NF002076">
    <property type="entry name" value="PRK00913.2-3"/>
    <property type="match status" value="1"/>
</dbReference>
<dbReference type="NCBIfam" id="NF002081">
    <property type="entry name" value="PRK00913.3-3"/>
    <property type="match status" value="1"/>
</dbReference>
<dbReference type="NCBIfam" id="NF002083">
    <property type="entry name" value="PRK00913.3-5"/>
    <property type="match status" value="1"/>
</dbReference>
<dbReference type="PANTHER" id="PTHR11963:SF23">
    <property type="entry name" value="CYTOSOL AMINOPEPTIDASE"/>
    <property type="match status" value="1"/>
</dbReference>
<dbReference type="PANTHER" id="PTHR11963">
    <property type="entry name" value="LEUCINE AMINOPEPTIDASE-RELATED"/>
    <property type="match status" value="1"/>
</dbReference>
<dbReference type="Pfam" id="PF00883">
    <property type="entry name" value="Peptidase_M17"/>
    <property type="match status" value="1"/>
</dbReference>
<dbReference type="Pfam" id="PF02789">
    <property type="entry name" value="Peptidase_M17_N"/>
    <property type="match status" value="1"/>
</dbReference>
<dbReference type="PRINTS" id="PR00481">
    <property type="entry name" value="LAMNOPPTDASE"/>
</dbReference>
<dbReference type="SUPFAM" id="SSF52949">
    <property type="entry name" value="Macro domain-like"/>
    <property type="match status" value="1"/>
</dbReference>
<dbReference type="SUPFAM" id="SSF53187">
    <property type="entry name" value="Zn-dependent exopeptidases"/>
    <property type="match status" value="1"/>
</dbReference>
<dbReference type="PROSITE" id="PS00631">
    <property type="entry name" value="CYTOSOL_AP"/>
    <property type="match status" value="1"/>
</dbReference>
<proteinExistence type="inferred from homology"/>
<comment type="function">
    <text evidence="1">Presumably involved in the processing and regular turnover of intracellular proteins. Catalyzes the removal of unsubstituted N-terminal amino acids from various peptides.</text>
</comment>
<comment type="catalytic activity">
    <reaction evidence="1">
        <text>Release of an N-terminal amino acid, Xaa-|-Yaa-, in which Xaa is preferably Leu, but may be other amino acids including Pro although not Arg or Lys, and Yaa may be Pro. Amino acid amides and methyl esters are also readily hydrolyzed, but rates on arylamides are exceedingly low.</text>
        <dbReference type="EC" id="3.4.11.1"/>
    </reaction>
</comment>
<comment type="catalytic activity">
    <reaction evidence="1">
        <text>Release of an N-terminal amino acid, preferentially leucine, but not glutamic or aspartic acids.</text>
        <dbReference type="EC" id="3.4.11.10"/>
    </reaction>
</comment>
<comment type="cofactor">
    <cofactor evidence="1">
        <name>Mn(2+)</name>
        <dbReference type="ChEBI" id="CHEBI:29035"/>
    </cofactor>
    <text evidence="1">Binds 2 manganese ions per subunit.</text>
</comment>
<comment type="subcellular location">
    <subcellularLocation>
        <location evidence="1">Cytoplasm</location>
    </subcellularLocation>
</comment>
<comment type="similarity">
    <text evidence="1">Belongs to the peptidase M17 family.</text>
</comment>
<gene>
    <name evidence="1" type="primary">pepA</name>
    <name type="ordered locus">SYO3AOP1_0038</name>
</gene>
<accession>B2V6F5</accession>
<name>AMPA_SULSY</name>